<comment type="function">
    <text evidence="1 3">Essential component of the apolipoprotein B mRNA editing enzyme complex which is responsible for the postranscriptional editing of a CAA codon for Gln to a UAA codon for stop in APOB mRNA. Binds to APOB mRNA and is probably responsible for docking the catalytic subunit, APOBEC1, to the mRNA to allow it to deaminate its target cytosine. The complex also seems to protect the edited APOB mRNA from nonsense-mediated decay (By similarity).</text>
</comment>
<comment type="subunit">
    <text evidence="1">Part of the apolipoprotein B mRNA editing complex with APOBEC1. Interacts with TNPO2; TNPO2 may be responsible for transport of A1CF into the nucleus. Interacts with SYNCRIP. Interacts with CELF2/CUGBP2. Interacts with RBM47.</text>
</comment>
<comment type="subcellular location">
    <subcellularLocation>
        <location evidence="4">Nucleus</location>
    </subcellularLocation>
    <subcellularLocation>
        <location evidence="4">Endoplasmic reticulum</location>
    </subcellularLocation>
    <subcellularLocation>
        <location evidence="4">Cytoplasm</location>
    </subcellularLocation>
    <text>Predominantly nuclear where it localizes to heterochromatin. Also cytoplasmic where it is found at the outer surface of the endoplasmic reticulum. Shuttles between the nucleus and cytoplasm. May be transported into the nucleus by the nuclear import protein TNPO2/TRN2 or by APOBEC1.</text>
</comment>
<comment type="alternative products">
    <event type="alternative splicing"/>
    <isoform>
        <id>Q923K9-1</id>
        <name evidence="5">1</name>
        <name evidence="7">ACF65</name>
        <sequence type="displayed"/>
    </isoform>
    <isoform>
        <id>Q923K9-2</id>
        <name evidence="4">2</name>
        <name evidence="7">ACF64</name>
        <sequence type="described" ref="VSP_051934"/>
    </isoform>
    <isoform>
        <id>Q923K9-3</id>
        <name evidence="5">3</name>
        <name evidence="7">ACF45</name>
        <sequence type="described" ref="VSP_051933 VSP_051937"/>
    </isoform>
    <isoform>
        <id>Q923K9-4</id>
        <name evidence="5">4</name>
        <name evidence="7">ACF43</name>
        <sequence type="described" ref="VSP_051935 VSP_051936"/>
    </isoform>
</comment>
<comment type="tissue specificity">
    <text evidence="5">Isoforms 1 and 2 are widely expressed while isoforms 3 and 4 are restricted to liver and small intestine.</text>
</comment>
<comment type="domain">
    <text evidence="1">The RRM domains are necessary but not sufficient for binding to APOB mRNA. Additional residues in the pre-RRM and C-terminal regions are required for RNA-binding and for complementing APOBEC1 activity (By similarity).</text>
</comment>
<gene>
    <name type="primary">A1cf</name>
    <name type="synonym">Acf</name>
    <name evidence="1" type="synonym">Asp</name>
</gene>
<dbReference type="EMBL" id="AF290984">
    <property type="protein sequence ID" value="AAK83095.1"/>
    <property type="molecule type" value="mRNA"/>
</dbReference>
<dbReference type="EMBL" id="AF442133">
    <property type="protein sequence ID" value="AAO15465.1"/>
    <property type="molecule type" value="mRNA"/>
</dbReference>
<dbReference type="EMBL" id="AF442134">
    <property type="protein sequence ID" value="AAO15466.1"/>
    <property type="molecule type" value="mRNA"/>
</dbReference>
<dbReference type="EMBL" id="AF442135">
    <property type="protein sequence ID" value="AAO15467.1"/>
    <property type="molecule type" value="Genomic_DNA"/>
</dbReference>
<dbReference type="EMBL" id="AF442135">
    <property type="protein sequence ID" value="AAO15468.1"/>
    <property type="molecule type" value="Genomic_DNA"/>
</dbReference>
<dbReference type="EMBL" id="AY028945">
    <property type="protein sequence ID" value="AAK50145.1"/>
    <property type="molecule type" value="mRNA"/>
</dbReference>
<dbReference type="RefSeq" id="NP_596891.1">
    <molecule id="Q923K9-2"/>
    <property type="nucleotide sequence ID" value="NM_133400.1"/>
</dbReference>
<dbReference type="SMR" id="Q923K9"/>
<dbReference type="CORUM" id="Q923K9"/>
<dbReference type="FunCoup" id="Q923K9">
    <property type="interactions" value="14"/>
</dbReference>
<dbReference type="IntAct" id="Q923K9">
    <property type="interactions" value="1"/>
</dbReference>
<dbReference type="STRING" id="10116.ENSRNOP00000062802"/>
<dbReference type="iPTMnet" id="Q923K9"/>
<dbReference type="PhosphoSitePlus" id="Q923K9"/>
<dbReference type="PaxDb" id="10116-ENSRNOP00000062802"/>
<dbReference type="GeneID" id="170912"/>
<dbReference type="KEGG" id="rno:170912"/>
<dbReference type="UCSC" id="RGD:619834">
    <molecule id="Q923K9-1"/>
    <property type="organism name" value="rat"/>
</dbReference>
<dbReference type="AGR" id="RGD:619834"/>
<dbReference type="CTD" id="29974"/>
<dbReference type="RGD" id="619834">
    <property type="gene designation" value="A1cf"/>
</dbReference>
<dbReference type="eggNOG" id="KOG0117">
    <property type="taxonomic scope" value="Eukaryota"/>
</dbReference>
<dbReference type="InParanoid" id="Q923K9"/>
<dbReference type="PhylomeDB" id="Q923K9"/>
<dbReference type="Reactome" id="R-RNO-72200">
    <property type="pathway name" value="mRNA Editing: C to U Conversion"/>
</dbReference>
<dbReference type="Reactome" id="R-RNO-75094">
    <property type="pathway name" value="Formation of the Editosome"/>
</dbReference>
<dbReference type="PRO" id="PR:Q923K9"/>
<dbReference type="Proteomes" id="UP000002494">
    <property type="component" value="Unplaced"/>
</dbReference>
<dbReference type="GO" id="GO:0030895">
    <property type="term" value="C:apolipoprotein B mRNA editing enzyme complex"/>
    <property type="evidence" value="ECO:0000250"/>
    <property type="project" value="UniProtKB"/>
</dbReference>
<dbReference type="GO" id="GO:0005737">
    <property type="term" value="C:cytoplasm"/>
    <property type="evidence" value="ECO:0000314"/>
    <property type="project" value="UniProtKB"/>
</dbReference>
<dbReference type="GO" id="GO:0005783">
    <property type="term" value="C:endoplasmic reticulum"/>
    <property type="evidence" value="ECO:0007669"/>
    <property type="project" value="UniProtKB-SubCell"/>
</dbReference>
<dbReference type="GO" id="GO:0000792">
    <property type="term" value="C:heterochromatin"/>
    <property type="evidence" value="ECO:0000314"/>
    <property type="project" value="RGD"/>
</dbReference>
<dbReference type="GO" id="GO:0045293">
    <property type="term" value="C:mRNA editing complex"/>
    <property type="evidence" value="ECO:0000314"/>
    <property type="project" value="RGD"/>
</dbReference>
<dbReference type="GO" id="GO:0005634">
    <property type="term" value="C:nucleus"/>
    <property type="evidence" value="ECO:0000266"/>
    <property type="project" value="RGD"/>
</dbReference>
<dbReference type="GO" id="GO:0140767">
    <property type="term" value="F:enzyme-substrate adaptor activity"/>
    <property type="evidence" value="ECO:0000266"/>
    <property type="project" value="RGD"/>
</dbReference>
<dbReference type="GO" id="GO:0003729">
    <property type="term" value="F:mRNA binding"/>
    <property type="evidence" value="ECO:0000314"/>
    <property type="project" value="RGD"/>
</dbReference>
<dbReference type="GO" id="GO:0003727">
    <property type="term" value="F:single-stranded RNA binding"/>
    <property type="evidence" value="ECO:0000250"/>
    <property type="project" value="UniProtKB"/>
</dbReference>
<dbReference type="GO" id="GO:0016554">
    <property type="term" value="P:cytidine to uridine editing"/>
    <property type="evidence" value="ECO:0000315"/>
    <property type="project" value="RGD"/>
</dbReference>
<dbReference type="GO" id="GO:0007566">
    <property type="term" value="P:embryo implantation"/>
    <property type="evidence" value="ECO:0000266"/>
    <property type="project" value="RGD"/>
</dbReference>
<dbReference type="GO" id="GO:0010609">
    <property type="term" value="P:mRNA localization resulting in post-transcriptional regulation of gene expression"/>
    <property type="evidence" value="ECO:0000266"/>
    <property type="project" value="RGD"/>
</dbReference>
<dbReference type="GO" id="GO:0016556">
    <property type="term" value="P:mRNA modification"/>
    <property type="evidence" value="ECO:0000266"/>
    <property type="project" value="RGD"/>
</dbReference>
<dbReference type="GO" id="GO:0006397">
    <property type="term" value="P:mRNA processing"/>
    <property type="evidence" value="ECO:0007669"/>
    <property type="project" value="UniProtKB-KW"/>
</dbReference>
<dbReference type="GO" id="GO:2000623">
    <property type="term" value="P:negative regulation of nuclear-transcribed mRNA catabolic process, nonsense-mediated decay"/>
    <property type="evidence" value="ECO:0000266"/>
    <property type="project" value="RGD"/>
</dbReference>
<dbReference type="GO" id="GO:0050714">
    <property type="term" value="P:positive regulation of protein secretion"/>
    <property type="evidence" value="ECO:0000315"/>
    <property type="project" value="RGD"/>
</dbReference>
<dbReference type="GO" id="GO:0050821">
    <property type="term" value="P:protein stabilization"/>
    <property type="evidence" value="ECO:0000250"/>
    <property type="project" value="UniProtKB"/>
</dbReference>
<dbReference type="CDD" id="cd19900">
    <property type="entry name" value="DSRM_A1CF"/>
    <property type="match status" value="1"/>
</dbReference>
<dbReference type="CDD" id="cd12486">
    <property type="entry name" value="RRM1_ACF"/>
    <property type="match status" value="1"/>
</dbReference>
<dbReference type="CDD" id="cd12490">
    <property type="entry name" value="RRM2_ACF"/>
    <property type="match status" value="1"/>
</dbReference>
<dbReference type="CDD" id="cd12498">
    <property type="entry name" value="RRM3_ACF"/>
    <property type="match status" value="1"/>
</dbReference>
<dbReference type="FunFam" id="3.30.160.20:FF:000025">
    <property type="entry name" value="APOBEC1 complementation factor isoform X1"/>
    <property type="match status" value="1"/>
</dbReference>
<dbReference type="FunFam" id="3.30.70.330:FF:000022">
    <property type="entry name" value="APOBEC1 complementation factor isoform X1"/>
    <property type="match status" value="1"/>
</dbReference>
<dbReference type="FunFam" id="3.30.70.330:FF:000026">
    <property type="entry name" value="APOBEC1 complementation factor isoform X1"/>
    <property type="match status" value="1"/>
</dbReference>
<dbReference type="FunFam" id="3.30.70.330:FF:000179">
    <property type="entry name" value="APOBEC1 complementation factor isoform X1"/>
    <property type="match status" value="1"/>
</dbReference>
<dbReference type="Gene3D" id="3.30.160.20">
    <property type="match status" value="1"/>
</dbReference>
<dbReference type="Gene3D" id="3.30.70.330">
    <property type="match status" value="3"/>
</dbReference>
<dbReference type="InterPro" id="IPR044461">
    <property type="entry name" value="A1CF_DSRM"/>
</dbReference>
<dbReference type="InterPro" id="IPR034538">
    <property type="entry name" value="ACF_RRM1"/>
</dbReference>
<dbReference type="InterPro" id="IPR006535">
    <property type="entry name" value="HnRNP_R/Q_splicing_fac"/>
</dbReference>
<dbReference type="InterPro" id="IPR012677">
    <property type="entry name" value="Nucleotide-bd_a/b_plait_sf"/>
</dbReference>
<dbReference type="InterPro" id="IPR035979">
    <property type="entry name" value="RBD_domain_sf"/>
</dbReference>
<dbReference type="InterPro" id="IPR000504">
    <property type="entry name" value="RRM_dom"/>
</dbReference>
<dbReference type="NCBIfam" id="TIGR01648">
    <property type="entry name" value="hnRNP-R-Q"/>
    <property type="match status" value="1"/>
</dbReference>
<dbReference type="PANTHER" id="PTHR21245">
    <property type="entry name" value="HETEROGENEOUS NUCLEAR RIBONUCLEOPROTEIN"/>
    <property type="match status" value="1"/>
</dbReference>
<dbReference type="Pfam" id="PF14709">
    <property type="entry name" value="DND1_DSRM"/>
    <property type="match status" value="1"/>
</dbReference>
<dbReference type="Pfam" id="PF00076">
    <property type="entry name" value="RRM_1"/>
    <property type="match status" value="3"/>
</dbReference>
<dbReference type="SMART" id="SM00360">
    <property type="entry name" value="RRM"/>
    <property type="match status" value="3"/>
</dbReference>
<dbReference type="SUPFAM" id="SSF54768">
    <property type="entry name" value="dsRNA-binding domain-like"/>
    <property type="match status" value="1"/>
</dbReference>
<dbReference type="SUPFAM" id="SSF54928">
    <property type="entry name" value="RNA-binding domain, RBD"/>
    <property type="match status" value="3"/>
</dbReference>
<dbReference type="PROSITE" id="PS50102">
    <property type="entry name" value="RRM"/>
    <property type="match status" value="3"/>
</dbReference>
<feature type="chain" id="PRO_0000081485" description="APOBEC1 complementation factor">
    <location>
        <begin position="1"/>
        <end position="594"/>
    </location>
</feature>
<feature type="domain" description="RRM 1" evidence="2">
    <location>
        <begin position="56"/>
        <end position="134"/>
    </location>
</feature>
<feature type="domain" description="RRM 2" evidence="2">
    <location>
        <begin position="136"/>
        <end position="218"/>
    </location>
</feature>
<feature type="domain" description="RRM 3" evidence="2">
    <location>
        <begin position="231"/>
        <end position="303"/>
    </location>
</feature>
<feature type="region of interest" description="Required for nuclear localization" evidence="1">
    <location>
        <begin position="359"/>
        <end position="408"/>
    </location>
</feature>
<feature type="modified residue" description="Phosphothreonine" evidence="1">
    <location>
        <position position="498"/>
    </location>
</feature>
<feature type="splice variant" id="VSP_051933" description="In isoform 3." evidence="7">
    <original>EIYMNVPVGAAGVRGLGGRGYLAYTG</original>
    <variation>GCSRTPSIYLCFLTAVHAGVHHIHVQ</variation>
    <location>
        <begin position="380"/>
        <end position="405"/>
    </location>
</feature>
<feature type="splice variant" id="VSP_051934" description="In isoform 2." evidence="6">
    <location>
        <begin position="380"/>
        <end position="387"/>
    </location>
</feature>
<feature type="splice variant" id="VSP_051935" description="In isoform 4." evidence="7">
    <original>EIYM</original>
    <variation>GNIS</variation>
    <location>
        <begin position="380"/>
        <end position="383"/>
    </location>
</feature>
<feature type="splice variant" id="VSP_051936" description="In isoform 4." evidence="7">
    <location>
        <begin position="384"/>
        <end position="594"/>
    </location>
</feature>
<feature type="splice variant" id="VSP_051937" description="In isoform 3." evidence="7">
    <location>
        <begin position="406"/>
        <end position="594"/>
    </location>
</feature>
<feature type="sequence conflict" description="In Ref. 2; AAO15465/AAO15466." evidence="8" ref="2">
    <original>T</original>
    <variation>A</variation>
    <location>
        <position position="348"/>
    </location>
</feature>
<feature type="sequence conflict" description="In Ref. 2; AAO15467." evidence="8" ref="2">
    <original>G</original>
    <variation>P</variation>
    <location>
        <position position="405"/>
    </location>
</feature>
<keyword id="KW-0025">Alternative splicing</keyword>
<keyword id="KW-0963">Cytoplasm</keyword>
<keyword id="KW-0903">Direct protein sequencing</keyword>
<keyword id="KW-0256">Endoplasmic reticulum</keyword>
<keyword id="KW-0507">mRNA processing</keyword>
<keyword id="KW-0539">Nucleus</keyword>
<keyword id="KW-0597">Phosphoprotein</keyword>
<keyword id="KW-1185">Reference proteome</keyword>
<keyword id="KW-0677">Repeat</keyword>
<keyword id="KW-0694">RNA-binding</keyword>
<accession>Q923K9</accession>
<accession>Q8CH55</accession>
<accession>Q8CH56</accession>
<accession>Q8CH57</accession>
<accession>Q8CH58</accession>
<accession>Q924K3</accession>
<name>A1CF_RAT</name>
<reference evidence="8 10" key="1">
    <citation type="journal article" date="2002" name="J. Cell Sci.">
        <title>The editosome for cytidine to uridine mRNA editing has a native complexity of 27S: identification of intracellular domains containing active and inactive editing factors.</title>
        <authorList>
            <person name="Sowden M.P."/>
            <person name="Ballatori N."/>
            <person name="de Mesy Jensen K.L."/>
            <person name="Hamilton Reed L."/>
            <person name="Smith H.C."/>
        </authorList>
    </citation>
    <scope>NUCLEOTIDE SEQUENCE [MRNA] (ISOFORM 2)</scope>
    <scope>SUBCELLULAR LOCATION</scope>
    <source>
        <strain evidence="10">Sprague-Dawley</strain>
        <tissue evidence="4">Liver</tissue>
    </source>
</reference>
<reference evidence="8 11" key="2">
    <citation type="journal article" date="2004" name="J. Biol. Chem.">
        <title>Identification of novel alternative splice variants of APOBEC-1 complementation factor with different capacities to support apolipoprotein B mRNA editing.</title>
        <authorList>
            <person name="Sowden M.P."/>
            <person name="Lehmann D.M."/>
            <person name="Lin X."/>
            <person name="Smith C.O."/>
            <person name="Smith H.C."/>
        </authorList>
    </citation>
    <scope>NUCLEOTIDE SEQUENCE [MRNA] (ISOFORMS 3 AND 4)</scope>
    <scope>NUCLEOTIDE SEQUENCE [GENOMIC DNA] OF 295-594 (ISOFORM 3)</scope>
    <scope>NUCLEOTIDE SEQUENCE [GENOMIC DNA] OF 295-409 (ISOFORM 1)</scope>
    <scope>TISSUE SPECIFICITY</scope>
    <source>
        <strain evidence="11">Sprague-Dawley</strain>
        <tissue evidence="5">Liver</tissue>
    </source>
</reference>
<reference evidence="8 9" key="3">
    <citation type="submission" date="2001-03" db="EMBL/GenBank/DDBJ databases">
        <title>An isoform of rat APOBEC-1 complementation factor p66/ACF.</title>
        <authorList>
            <person name="Sowden M.P."/>
            <person name="Smith H.C."/>
        </authorList>
    </citation>
    <scope>NUCLEOTIDE SEQUENCE [MRNA] (ISOFORM 1)</scope>
    <source>
        <strain>Sprague-Dawley</strain>
    </source>
</reference>
<reference evidence="8" key="4">
    <citation type="journal article" date="2000" name="J. Biol. Chem.">
        <title>Purification and molecular cloning of a novel essential component of the apolipoprotein B mRNA editing enzyme-complex.</title>
        <authorList>
            <person name="Lellek H."/>
            <person name="Kirsten R."/>
            <person name="Diehl I."/>
            <person name="Apostel F."/>
            <person name="Buck F."/>
            <person name="Greeve J."/>
        </authorList>
    </citation>
    <scope>PARTIAL PROTEIN SEQUENCE</scope>
    <scope>FUNCTION</scope>
    <source>
        <tissue evidence="3">Liver</tissue>
    </source>
</reference>
<organism>
    <name type="scientific">Rattus norvegicus</name>
    <name type="common">Rat</name>
    <dbReference type="NCBI Taxonomy" id="10116"/>
    <lineage>
        <taxon>Eukaryota</taxon>
        <taxon>Metazoa</taxon>
        <taxon>Chordata</taxon>
        <taxon>Craniata</taxon>
        <taxon>Vertebrata</taxon>
        <taxon>Euteleostomi</taxon>
        <taxon>Mammalia</taxon>
        <taxon>Eutheria</taxon>
        <taxon>Euarchontoglires</taxon>
        <taxon>Glires</taxon>
        <taxon>Rodentia</taxon>
        <taxon>Myomorpha</taxon>
        <taxon>Muroidea</taxon>
        <taxon>Muridae</taxon>
        <taxon>Murinae</taxon>
        <taxon>Rattus</taxon>
    </lineage>
</organism>
<sequence>MESNHKSGDGLSGTQKEAALRALVQRTGYSLVQENGQRKYGGPPPGWDTTPPERGCEIFIGKLPRDLFEDELIPLCEKIGKIYEMRMMMDFNGNNRGYAFVTFSNKQEAKNAIKQLNNYEIRNGRLLGVCASVDNCRLFVGGIPKTKKREEILSEMKKVTEGVVDVIVYPSAADKTKNRGFAFVEYESHRAAAMARRRLLPGRIQLWGHPIAVDWAEPEVEVDEDTMSSVKILYVRNLMLSTSEEMIEKEFNSIKPGAVERVKKIRDYAFVHFSNREDAVEAMKALNGKVLDGSPIEVTLAKPVDKDSYVRYTRGTGGRNTMLQEYTYPLSHVYDPTTTYLGAPVFYTPQAYAAIPSLHFPATKGHLSNRALIRTPSVREIYMNVPVGAAGVRGLGGRGYLAYTGLGRGYQVKGDKRQDKLYDLLPGMELTPMNTISLKPQGVKLAPQILEEICQKNNWGQPVYQLHSAIGQDQRQLFLYKVTIPALASQNPAIHPFTPPKLSAYVDEAKRYAAEHTLQTLGIPTEGGDAGTTAPTATSATVFPGYAVPSATAPVSTAQLKQAVTLGQDLAAYTTYEVYPTFAVTTRGDGYGTF</sequence>
<proteinExistence type="evidence at protein level"/>
<protein>
    <recommendedName>
        <fullName>APOBEC1 complementation factor</fullName>
    </recommendedName>
    <alternativeName>
        <fullName>APOBEC1-stimulating protein</fullName>
    </alternativeName>
</protein>
<evidence type="ECO:0000250" key="1">
    <source>
        <dbReference type="UniProtKB" id="Q9NQ94"/>
    </source>
</evidence>
<evidence type="ECO:0000255" key="2">
    <source>
        <dbReference type="PROSITE-ProRule" id="PRU00176"/>
    </source>
</evidence>
<evidence type="ECO:0000269" key="3">
    <source>
    </source>
</evidence>
<evidence type="ECO:0000269" key="4">
    <source>
    </source>
</evidence>
<evidence type="ECO:0000269" key="5">
    <source>
    </source>
</evidence>
<evidence type="ECO:0000303" key="6">
    <source>
    </source>
</evidence>
<evidence type="ECO:0000303" key="7">
    <source>
    </source>
</evidence>
<evidence type="ECO:0000305" key="8"/>
<evidence type="ECO:0000312" key="9">
    <source>
        <dbReference type="EMBL" id="AAK50145.1"/>
    </source>
</evidence>
<evidence type="ECO:0000312" key="10">
    <source>
        <dbReference type="EMBL" id="AAK83095.1"/>
    </source>
</evidence>
<evidence type="ECO:0000312" key="11">
    <source>
        <dbReference type="EMBL" id="AAO15466.1"/>
    </source>
</evidence>